<name>PURQ_LATSS</name>
<sequence length="228" mass="24120">MKFAVLVFPGSNCDADLYHAIVDVCHEEAAYVSYTATSLAGFDAVLIPGGFSYDDYLRSGAIAKLAPIMTAVVAFAKAGKPVLGICNGFQILTEAGLLPGALLPNRQTHFICETVTLQVENNDTRFTNQYAKGATIALPIAHGEGNYYCDPETLAQLHANHQIAFTYTTDVNGSLDNIAGITNEAGNVLGMMPHPERAVEVLLGSADGLGVFQSILTTLKSGVVTHGE</sequence>
<comment type="function">
    <text evidence="1">Part of the phosphoribosylformylglycinamidine synthase complex involved in the purines biosynthetic pathway. Catalyzes the ATP-dependent conversion of formylglycinamide ribonucleotide (FGAR) and glutamine to yield formylglycinamidine ribonucleotide (FGAM) and glutamate. The FGAM synthase complex is composed of three subunits. PurQ produces an ammonia molecule by converting glutamine to glutamate. PurL transfers the ammonia molecule to FGAR to form FGAM in an ATP-dependent manner. PurS interacts with PurQ and PurL and is thought to assist in the transfer of the ammonia molecule from PurQ to PurL.</text>
</comment>
<comment type="catalytic activity">
    <reaction evidence="1">
        <text>N(2)-formyl-N(1)-(5-phospho-beta-D-ribosyl)glycinamide + L-glutamine + ATP + H2O = 2-formamido-N(1)-(5-O-phospho-beta-D-ribosyl)acetamidine + L-glutamate + ADP + phosphate + H(+)</text>
        <dbReference type="Rhea" id="RHEA:17129"/>
        <dbReference type="ChEBI" id="CHEBI:15377"/>
        <dbReference type="ChEBI" id="CHEBI:15378"/>
        <dbReference type="ChEBI" id="CHEBI:29985"/>
        <dbReference type="ChEBI" id="CHEBI:30616"/>
        <dbReference type="ChEBI" id="CHEBI:43474"/>
        <dbReference type="ChEBI" id="CHEBI:58359"/>
        <dbReference type="ChEBI" id="CHEBI:147286"/>
        <dbReference type="ChEBI" id="CHEBI:147287"/>
        <dbReference type="ChEBI" id="CHEBI:456216"/>
        <dbReference type="EC" id="6.3.5.3"/>
    </reaction>
</comment>
<comment type="catalytic activity">
    <reaction evidence="1">
        <text>L-glutamine + H2O = L-glutamate + NH4(+)</text>
        <dbReference type="Rhea" id="RHEA:15889"/>
        <dbReference type="ChEBI" id="CHEBI:15377"/>
        <dbReference type="ChEBI" id="CHEBI:28938"/>
        <dbReference type="ChEBI" id="CHEBI:29985"/>
        <dbReference type="ChEBI" id="CHEBI:58359"/>
        <dbReference type="EC" id="3.5.1.2"/>
    </reaction>
</comment>
<comment type="pathway">
    <text evidence="1">Purine metabolism; IMP biosynthesis via de novo pathway; 5-amino-1-(5-phospho-D-ribosyl)imidazole from N(2)-formyl-N(1)-(5-phospho-D-ribosyl)glycinamide: step 1/2.</text>
</comment>
<comment type="subunit">
    <text evidence="1">Part of the FGAM synthase complex composed of 1 PurL, 1 PurQ and 2 PurS subunits.</text>
</comment>
<comment type="subcellular location">
    <subcellularLocation>
        <location evidence="1">Cytoplasm</location>
    </subcellularLocation>
</comment>
<evidence type="ECO:0000255" key="1">
    <source>
        <dbReference type="HAMAP-Rule" id="MF_00421"/>
    </source>
</evidence>
<gene>
    <name evidence="1" type="primary">purQ</name>
    <name type="ordered locus">LCA_0657</name>
</gene>
<keyword id="KW-0067">ATP-binding</keyword>
<keyword id="KW-0963">Cytoplasm</keyword>
<keyword id="KW-0315">Glutamine amidotransferase</keyword>
<keyword id="KW-0378">Hydrolase</keyword>
<keyword id="KW-0436">Ligase</keyword>
<keyword id="KW-0547">Nucleotide-binding</keyword>
<keyword id="KW-0658">Purine biosynthesis</keyword>
<keyword id="KW-1185">Reference proteome</keyword>
<feature type="chain" id="PRO_0000252709" description="Phosphoribosylformylglycinamidine synthase subunit PurQ">
    <location>
        <begin position="1"/>
        <end position="228"/>
    </location>
</feature>
<feature type="domain" description="Glutamine amidotransferase type-1" evidence="1">
    <location>
        <begin position="3"/>
        <end position="225"/>
    </location>
</feature>
<feature type="active site" description="Nucleophile" evidence="1">
    <location>
        <position position="86"/>
    </location>
</feature>
<feature type="active site" evidence="1">
    <location>
        <position position="194"/>
    </location>
</feature>
<feature type="active site" evidence="1">
    <location>
        <position position="196"/>
    </location>
</feature>
<proteinExistence type="inferred from homology"/>
<accession>Q38XW8</accession>
<organism>
    <name type="scientific">Latilactobacillus sakei subsp. sakei (strain 23K)</name>
    <name type="common">Lactobacillus sakei subsp. sakei</name>
    <dbReference type="NCBI Taxonomy" id="314315"/>
    <lineage>
        <taxon>Bacteria</taxon>
        <taxon>Bacillati</taxon>
        <taxon>Bacillota</taxon>
        <taxon>Bacilli</taxon>
        <taxon>Lactobacillales</taxon>
        <taxon>Lactobacillaceae</taxon>
        <taxon>Latilactobacillus</taxon>
    </lineage>
</organism>
<dbReference type="EC" id="6.3.5.3" evidence="1"/>
<dbReference type="EC" id="3.5.1.2" evidence="1"/>
<dbReference type="EMBL" id="CR936503">
    <property type="protein sequence ID" value="CAI54961.1"/>
    <property type="molecule type" value="Genomic_DNA"/>
</dbReference>
<dbReference type="RefSeq" id="WP_011374366.1">
    <property type="nucleotide sequence ID" value="NC_007576.1"/>
</dbReference>
<dbReference type="SMR" id="Q38XW8"/>
<dbReference type="STRING" id="314315.LCA_0657"/>
<dbReference type="KEGG" id="lsa:LCA_0657"/>
<dbReference type="eggNOG" id="COG0047">
    <property type="taxonomic scope" value="Bacteria"/>
</dbReference>
<dbReference type="HOGENOM" id="CLU_001031_3_1_9"/>
<dbReference type="OrthoDB" id="9804441at2"/>
<dbReference type="UniPathway" id="UPA00074">
    <property type="reaction ID" value="UER00128"/>
</dbReference>
<dbReference type="Proteomes" id="UP000002707">
    <property type="component" value="Chromosome"/>
</dbReference>
<dbReference type="GO" id="GO:0005737">
    <property type="term" value="C:cytoplasm"/>
    <property type="evidence" value="ECO:0007669"/>
    <property type="project" value="UniProtKB-SubCell"/>
</dbReference>
<dbReference type="GO" id="GO:0005524">
    <property type="term" value="F:ATP binding"/>
    <property type="evidence" value="ECO:0007669"/>
    <property type="project" value="UniProtKB-KW"/>
</dbReference>
<dbReference type="GO" id="GO:0004359">
    <property type="term" value="F:glutaminase activity"/>
    <property type="evidence" value="ECO:0007669"/>
    <property type="project" value="UniProtKB-EC"/>
</dbReference>
<dbReference type="GO" id="GO:0004642">
    <property type="term" value="F:phosphoribosylformylglycinamidine synthase activity"/>
    <property type="evidence" value="ECO:0007669"/>
    <property type="project" value="UniProtKB-UniRule"/>
</dbReference>
<dbReference type="GO" id="GO:0006189">
    <property type="term" value="P:'de novo' IMP biosynthetic process"/>
    <property type="evidence" value="ECO:0007669"/>
    <property type="project" value="UniProtKB-UniRule"/>
</dbReference>
<dbReference type="CDD" id="cd01740">
    <property type="entry name" value="GATase1_FGAR_AT"/>
    <property type="match status" value="1"/>
</dbReference>
<dbReference type="FunFam" id="3.40.50.880:FF:000019">
    <property type="entry name" value="Phosphoribosylformylglycinamidine synthase subunit PurQ"/>
    <property type="match status" value="1"/>
</dbReference>
<dbReference type="Gene3D" id="3.40.50.880">
    <property type="match status" value="1"/>
</dbReference>
<dbReference type="HAMAP" id="MF_00421">
    <property type="entry name" value="PurQ"/>
    <property type="match status" value="1"/>
</dbReference>
<dbReference type="InterPro" id="IPR029062">
    <property type="entry name" value="Class_I_gatase-like"/>
</dbReference>
<dbReference type="InterPro" id="IPR010075">
    <property type="entry name" value="PRibForGlyAmidine_synth_PurQ"/>
</dbReference>
<dbReference type="NCBIfam" id="TIGR01737">
    <property type="entry name" value="FGAM_synth_I"/>
    <property type="match status" value="1"/>
</dbReference>
<dbReference type="NCBIfam" id="NF002957">
    <property type="entry name" value="PRK03619.1"/>
    <property type="match status" value="1"/>
</dbReference>
<dbReference type="PANTHER" id="PTHR47552">
    <property type="entry name" value="PHOSPHORIBOSYLFORMYLGLYCINAMIDINE SYNTHASE SUBUNIT PURQ"/>
    <property type="match status" value="1"/>
</dbReference>
<dbReference type="PANTHER" id="PTHR47552:SF1">
    <property type="entry name" value="PHOSPHORIBOSYLFORMYLGLYCINAMIDINE SYNTHASE SUBUNIT PURQ"/>
    <property type="match status" value="1"/>
</dbReference>
<dbReference type="Pfam" id="PF13507">
    <property type="entry name" value="GATase_5"/>
    <property type="match status" value="1"/>
</dbReference>
<dbReference type="PIRSF" id="PIRSF001586">
    <property type="entry name" value="FGAM_synth_I"/>
    <property type="match status" value="1"/>
</dbReference>
<dbReference type="SMART" id="SM01211">
    <property type="entry name" value="GATase_5"/>
    <property type="match status" value="1"/>
</dbReference>
<dbReference type="SUPFAM" id="SSF52317">
    <property type="entry name" value="Class I glutamine amidotransferase-like"/>
    <property type="match status" value="1"/>
</dbReference>
<dbReference type="PROSITE" id="PS51273">
    <property type="entry name" value="GATASE_TYPE_1"/>
    <property type="match status" value="1"/>
</dbReference>
<protein>
    <recommendedName>
        <fullName evidence="1">Phosphoribosylformylglycinamidine synthase subunit PurQ</fullName>
        <shortName evidence="1">FGAM synthase</shortName>
        <ecNumber evidence="1">6.3.5.3</ecNumber>
    </recommendedName>
    <alternativeName>
        <fullName evidence="1">Formylglycinamide ribonucleotide amidotransferase subunit I</fullName>
        <shortName evidence="1">FGAR amidotransferase I</shortName>
        <shortName evidence="1">FGAR-AT I</shortName>
    </alternativeName>
    <alternativeName>
        <fullName evidence="1">Glutaminase PurQ</fullName>
        <ecNumber evidence="1">3.5.1.2</ecNumber>
    </alternativeName>
    <alternativeName>
        <fullName evidence="1">Phosphoribosylformylglycinamidine synthase subunit I</fullName>
    </alternativeName>
</protein>
<reference key="1">
    <citation type="journal article" date="2005" name="Nat. Biotechnol.">
        <title>The complete genome sequence of the meat-borne lactic acid bacterium Lactobacillus sakei 23K.</title>
        <authorList>
            <person name="Chaillou S."/>
            <person name="Champomier-Verges M.-C."/>
            <person name="Cornet M."/>
            <person name="Crutz-Le Coq A.-M."/>
            <person name="Dudez A.-M."/>
            <person name="Martin V."/>
            <person name="Beaufils S."/>
            <person name="Darbon-Rongere E."/>
            <person name="Bossy R."/>
            <person name="Loux V."/>
            <person name="Zagorec M."/>
        </authorList>
    </citation>
    <scope>NUCLEOTIDE SEQUENCE [LARGE SCALE GENOMIC DNA]</scope>
    <source>
        <strain>23K</strain>
    </source>
</reference>